<proteinExistence type="inferred from homology"/>
<keyword id="KW-0150">Chloroplast</keyword>
<keyword id="KW-0934">Plastid</keyword>
<keyword id="KW-0687">Ribonucleoprotein</keyword>
<keyword id="KW-0689">Ribosomal protein</keyword>
<keyword id="KW-0694">RNA-binding</keyword>
<keyword id="KW-0699">rRNA-binding</keyword>
<sequence length="202" mass="23506">MSRYRGPRVKIIRRLGVLPGLTNKIPQLKSSSINQSTSNKKISQYRIRLEEKQKLRFHYGITERQLLNYVRIARKAKGSTGEVLLQLLEMRLDNIIFRLGMAPTIPGARQLVNHRHIGVNDCIVNIPSYRCKPQDFITIKNQQKSEAIISKNIEFYQKFKRPNHLTYSSLEKKGLVNRILDRESTGLKINELLVVEYYSRQA</sequence>
<organism>
    <name type="scientific">Hookeria lucens</name>
    <name type="common">Moss</name>
    <name type="synonym">Hypnum lucens</name>
    <dbReference type="NCBI Taxonomy" id="65539"/>
    <lineage>
        <taxon>Eukaryota</taxon>
        <taxon>Viridiplantae</taxon>
        <taxon>Streptophyta</taxon>
        <taxon>Embryophyta</taxon>
        <taxon>Bryophyta</taxon>
        <taxon>Bryophytina</taxon>
        <taxon>Bryopsida</taxon>
        <taxon>Bryidae</taxon>
        <taxon>Hypnanae</taxon>
        <taxon>Hookeriales</taxon>
        <taxon>Hookeriaceae</taxon>
        <taxon>Hookeria</taxon>
    </lineage>
</organism>
<evidence type="ECO:0000250" key="1"/>
<evidence type="ECO:0000305" key="2"/>
<accession>P59139</accession>
<name>RR4_HOOLU</name>
<protein>
    <recommendedName>
        <fullName evidence="2">Small ribosomal subunit protein uS4c</fullName>
    </recommendedName>
    <alternativeName>
        <fullName>30S ribosomal protein S4, chloroplastic</fullName>
    </alternativeName>
</protein>
<gene>
    <name type="primary">rps4</name>
</gene>
<geneLocation type="chloroplast"/>
<dbReference type="EMBL" id="AJ269689">
    <property type="protein sequence ID" value="CAC80629.1"/>
    <property type="molecule type" value="Genomic_DNA"/>
</dbReference>
<dbReference type="SMR" id="P59139"/>
<dbReference type="GO" id="GO:0009507">
    <property type="term" value="C:chloroplast"/>
    <property type="evidence" value="ECO:0007669"/>
    <property type="project" value="UniProtKB-SubCell"/>
</dbReference>
<dbReference type="GO" id="GO:0015935">
    <property type="term" value="C:small ribosomal subunit"/>
    <property type="evidence" value="ECO:0007669"/>
    <property type="project" value="InterPro"/>
</dbReference>
<dbReference type="GO" id="GO:0019843">
    <property type="term" value="F:rRNA binding"/>
    <property type="evidence" value="ECO:0007669"/>
    <property type="project" value="UniProtKB-UniRule"/>
</dbReference>
<dbReference type="GO" id="GO:0003735">
    <property type="term" value="F:structural constituent of ribosome"/>
    <property type="evidence" value="ECO:0007669"/>
    <property type="project" value="InterPro"/>
</dbReference>
<dbReference type="GO" id="GO:0042274">
    <property type="term" value="P:ribosomal small subunit biogenesis"/>
    <property type="evidence" value="ECO:0007669"/>
    <property type="project" value="TreeGrafter"/>
</dbReference>
<dbReference type="GO" id="GO:0006412">
    <property type="term" value="P:translation"/>
    <property type="evidence" value="ECO:0007669"/>
    <property type="project" value="UniProtKB-UniRule"/>
</dbReference>
<dbReference type="CDD" id="cd00165">
    <property type="entry name" value="S4"/>
    <property type="match status" value="1"/>
</dbReference>
<dbReference type="FunFam" id="1.10.1050.10:FF:000002">
    <property type="entry name" value="30S ribosomal protein S4, chloroplastic"/>
    <property type="match status" value="1"/>
</dbReference>
<dbReference type="FunFam" id="3.10.290.10:FF:000081">
    <property type="entry name" value="30S ribosomal protein S4, chloroplastic"/>
    <property type="match status" value="1"/>
</dbReference>
<dbReference type="Gene3D" id="1.10.1050.10">
    <property type="entry name" value="Ribosomal Protein S4 Delta 41, Chain A, domain 1"/>
    <property type="match status" value="1"/>
</dbReference>
<dbReference type="Gene3D" id="3.10.290.10">
    <property type="entry name" value="RNA-binding S4 domain"/>
    <property type="match status" value="1"/>
</dbReference>
<dbReference type="HAMAP" id="MF_01306_B">
    <property type="entry name" value="Ribosomal_uS4_B"/>
    <property type="match status" value="1"/>
</dbReference>
<dbReference type="InterPro" id="IPR022801">
    <property type="entry name" value="Ribosomal_uS4"/>
</dbReference>
<dbReference type="InterPro" id="IPR005709">
    <property type="entry name" value="Ribosomal_uS4_bac-type"/>
</dbReference>
<dbReference type="InterPro" id="IPR018079">
    <property type="entry name" value="Ribosomal_uS4_CS"/>
</dbReference>
<dbReference type="InterPro" id="IPR001912">
    <property type="entry name" value="Ribosomal_uS4_N"/>
</dbReference>
<dbReference type="InterPro" id="IPR002942">
    <property type="entry name" value="S4_RNA-bd"/>
</dbReference>
<dbReference type="InterPro" id="IPR036986">
    <property type="entry name" value="S4_RNA-bd_sf"/>
</dbReference>
<dbReference type="NCBIfam" id="NF003717">
    <property type="entry name" value="PRK05327.1"/>
    <property type="match status" value="1"/>
</dbReference>
<dbReference type="NCBIfam" id="TIGR01017">
    <property type="entry name" value="rpsD_bact"/>
    <property type="match status" value="1"/>
</dbReference>
<dbReference type="PANTHER" id="PTHR11831">
    <property type="entry name" value="30S 40S RIBOSOMAL PROTEIN"/>
    <property type="match status" value="1"/>
</dbReference>
<dbReference type="PANTHER" id="PTHR11831:SF4">
    <property type="entry name" value="SMALL RIBOSOMAL SUBUNIT PROTEIN US4M"/>
    <property type="match status" value="1"/>
</dbReference>
<dbReference type="Pfam" id="PF00163">
    <property type="entry name" value="Ribosomal_S4"/>
    <property type="match status" value="1"/>
</dbReference>
<dbReference type="Pfam" id="PF01479">
    <property type="entry name" value="S4"/>
    <property type="match status" value="1"/>
</dbReference>
<dbReference type="SMART" id="SM01390">
    <property type="entry name" value="Ribosomal_S4"/>
    <property type="match status" value="1"/>
</dbReference>
<dbReference type="SMART" id="SM00363">
    <property type="entry name" value="S4"/>
    <property type="match status" value="1"/>
</dbReference>
<dbReference type="SUPFAM" id="SSF55174">
    <property type="entry name" value="Alpha-L RNA-binding motif"/>
    <property type="match status" value="1"/>
</dbReference>
<dbReference type="PROSITE" id="PS00632">
    <property type="entry name" value="RIBOSOMAL_S4"/>
    <property type="match status" value="1"/>
</dbReference>
<dbReference type="PROSITE" id="PS50889">
    <property type="entry name" value="S4"/>
    <property type="match status" value="1"/>
</dbReference>
<feature type="chain" id="PRO_0000132600" description="Small ribosomal subunit protein uS4c">
    <location>
        <begin position="1"/>
        <end position="202"/>
    </location>
</feature>
<feature type="domain" description="S4 RNA-binding">
    <location>
        <begin position="90"/>
        <end position="153"/>
    </location>
</feature>
<comment type="function">
    <text evidence="1">One of the primary rRNA binding proteins, it binds directly to 16S rRNA where it nucleates assembly of the body of the 30S subunit.</text>
</comment>
<comment type="function">
    <text evidence="1">With S5 and S12 plays an important role in translational accuracy.</text>
</comment>
<comment type="subunit">
    <text evidence="1">Part of the 30S ribosomal subunit. Contacts protein S5. The interaction surface between S4 and S5 is involved in control of translational fidelity (By similarity).</text>
</comment>
<comment type="subcellular location">
    <subcellularLocation>
        <location>Plastid</location>
        <location>Chloroplast</location>
    </subcellularLocation>
</comment>
<comment type="similarity">
    <text evidence="2">Belongs to the universal ribosomal protein uS4 family.</text>
</comment>
<reference key="1">
    <citation type="journal article" date="2002" name="Cryptogam. Bryol.">
        <title>The systematic position of the Hypoptergiaceae (Bryopsida) inferred from rps4 gene sequences.</title>
        <authorList>
            <person name="Bloecher R."/>
            <person name="Capesius I."/>
        </authorList>
    </citation>
    <scope>NUCLEOTIDE SEQUENCE [GENOMIC DNA]</scope>
    <source>
        <tissue>Gametophyte</tissue>
    </source>
</reference>